<evidence type="ECO:0000250" key="1"/>
<evidence type="ECO:0000255" key="2"/>
<evidence type="ECO:0000256" key="3">
    <source>
        <dbReference type="SAM" id="MobiDB-lite"/>
    </source>
</evidence>
<evidence type="ECO:0000269" key="4">
    <source>
    </source>
</evidence>
<evidence type="ECO:0000305" key="5"/>
<evidence type="ECO:0000305" key="6">
    <source>
    </source>
</evidence>
<evidence type="ECO:0007829" key="7">
    <source>
        <dbReference type="PDB" id="7AQR"/>
    </source>
</evidence>
<evidence type="ECO:0007829" key="8">
    <source>
        <dbReference type="PDB" id="8BED"/>
    </source>
</evidence>
<keyword id="KW-0002">3D-structure</keyword>
<keyword id="KW-0004">4Fe-4S</keyword>
<keyword id="KW-0249">Electron transport</keyword>
<keyword id="KW-0285">Flavoprotein</keyword>
<keyword id="KW-0288">FMN</keyword>
<keyword id="KW-0408">Iron</keyword>
<keyword id="KW-0411">Iron-sulfur</keyword>
<keyword id="KW-0472">Membrane</keyword>
<keyword id="KW-0479">Metal-binding</keyword>
<keyword id="KW-0496">Mitochondrion</keyword>
<keyword id="KW-0999">Mitochondrion inner membrane</keyword>
<keyword id="KW-0520">NAD</keyword>
<keyword id="KW-0560">Oxidoreductase</keyword>
<keyword id="KW-1185">Reference proteome</keyword>
<keyword id="KW-0679">Respiratory chain</keyword>
<keyword id="KW-0809">Transit peptide</keyword>
<keyword id="KW-1278">Translocase</keyword>
<keyword id="KW-0813">Transport</keyword>
<keyword id="KW-0830">Ubiquinone</keyword>
<protein>
    <recommendedName>
        <fullName>NADH dehydrogenase [ubiquinone] flavoprotein 1, mitochondrial</fullName>
        <ecNumber>7.1.1.2</ecNumber>
    </recommendedName>
</protein>
<proteinExistence type="evidence at protein level"/>
<comment type="function">
    <text evidence="1">Core subunit of the mitochondrial membrane respiratory chain NADH dehydrogenase (Complex I) that is believed to belong to the minimal assembly required for catalysis. Complex I functions in the transfer of electrons from NADH to the respiratory chain. The immediate electron acceptor for the enzyme is believed to be ubiquinone (By similarity).</text>
</comment>
<comment type="catalytic activity">
    <reaction>
        <text>a ubiquinone + NADH + 5 H(+)(in) = a ubiquinol + NAD(+) + 4 H(+)(out)</text>
        <dbReference type="Rhea" id="RHEA:29091"/>
        <dbReference type="Rhea" id="RHEA-COMP:9565"/>
        <dbReference type="Rhea" id="RHEA-COMP:9566"/>
        <dbReference type="ChEBI" id="CHEBI:15378"/>
        <dbReference type="ChEBI" id="CHEBI:16389"/>
        <dbReference type="ChEBI" id="CHEBI:17976"/>
        <dbReference type="ChEBI" id="CHEBI:57540"/>
        <dbReference type="ChEBI" id="CHEBI:57945"/>
        <dbReference type="EC" id="7.1.1.2"/>
    </reaction>
</comment>
<comment type="cofactor">
    <cofactor evidence="5">
        <name>FMN</name>
        <dbReference type="ChEBI" id="CHEBI:58210"/>
    </cofactor>
    <text evidence="5">Binds 1 FMN.</text>
</comment>
<comment type="cofactor">
    <cofactor evidence="5">
        <name>[4Fe-4S] cluster</name>
        <dbReference type="ChEBI" id="CHEBI:49883"/>
    </cofactor>
    <text evidence="5">Binds 1 [4Fe-4S] cluster.</text>
</comment>
<comment type="subunit">
    <text>Complex I is composed of at least 49 different subunits. This is a component of the flavoprotein-sulfur (FP) fragment of the enzyme.</text>
</comment>
<comment type="subcellular location">
    <subcellularLocation>
        <location evidence="1 6">Mitochondrion inner membrane</location>
        <topology evidence="1">Peripheral membrane protein</topology>
        <orientation evidence="1">Matrix side</orientation>
    </subcellularLocation>
</comment>
<comment type="similarity">
    <text evidence="5">Belongs to the complex I 51 kDa subunit family.</text>
</comment>
<accession>Q9FNN5</accession>
<accession>Q8LAL7</accession>
<dbReference type="EC" id="7.1.1.2"/>
<dbReference type="EMBL" id="AB006697">
    <property type="protein sequence ID" value="BAB10002.1"/>
    <property type="molecule type" value="Genomic_DNA"/>
</dbReference>
<dbReference type="EMBL" id="CP002688">
    <property type="protein sequence ID" value="AED91315.1"/>
    <property type="molecule type" value="Genomic_DNA"/>
</dbReference>
<dbReference type="EMBL" id="AY092971">
    <property type="protein sequence ID" value="AAM12970.1"/>
    <property type="molecule type" value="mRNA"/>
</dbReference>
<dbReference type="EMBL" id="BT006620">
    <property type="protein sequence ID" value="AAP31964.1"/>
    <property type="molecule type" value="mRNA"/>
</dbReference>
<dbReference type="EMBL" id="AY087737">
    <property type="protein sequence ID" value="AAM65274.1"/>
    <property type="molecule type" value="mRNA"/>
</dbReference>
<dbReference type="PDB" id="7A23">
    <property type="method" value="EM"/>
    <property type="resolution" value="3.70 A"/>
    <property type="chains" value="A=1-486"/>
</dbReference>
<dbReference type="PDB" id="7A24">
    <property type="method" value="EM"/>
    <property type="resolution" value="3.80 A"/>
    <property type="chains" value="A=1-486"/>
</dbReference>
<dbReference type="PDB" id="7AQR">
    <property type="method" value="EM"/>
    <property type="resolution" value="2.91 A"/>
    <property type="chains" value="F=1-486"/>
</dbReference>
<dbReference type="PDB" id="7AR7">
    <property type="method" value="EM"/>
    <property type="resolution" value="3.72 A"/>
    <property type="chains" value="F=51-484"/>
</dbReference>
<dbReference type="PDB" id="7AR8">
    <property type="method" value="EM"/>
    <property type="resolution" value="3.53 A"/>
    <property type="chains" value="F=1-486"/>
</dbReference>
<dbReference type="PDB" id="7ARB">
    <property type="method" value="EM"/>
    <property type="resolution" value="3.41 A"/>
    <property type="chains" value="F=1-486"/>
</dbReference>
<dbReference type="PDB" id="8BED">
    <property type="method" value="EM"/>
    <property type="resolution" value="2.03 A"/>
    <property type="chains" value="F=1-486"/>
</dbReference>
<dbReference type="PDB" id="8BPX">
    <property type="method" value="EM"/>
    <property type="resolution" value="2.09 A"/>
    <property type="chains" value="F=1-486"/>
</dbReference>
<dbReference type="PDB" id="8BQ5">
    <property type="method" value="EM"/>
    <property type="resolution" value="2.73 A"/>
    <property type="chains" value="F=1-486"/>
</dbReference>
<dbReference type="PDB" id="8BQ6">
    <property type="method" value="EM"/>
    <property type="resolution" value="2.80 A"/>
    <property type="chains" value="F=1-486"/>
</dbReference>
<dbReference type="PDBsum" id="7A23"/>
<dbReference type="PDBsum" id="7A24"/>
<dbReference type="PDBsum" id="7AQR"/>
<dbReference type="PDBsum" id="7AR7"/>
<dbReference type="PDBsum" id="7AR8"/>
<dbReference type="PDBsum" id="7ARB"/>
<dbReference type="PDBsum" id="8BED"/>
<dbReference type="PDBsum" id="8BPX"/>
<dbReference type="PDBsum" id="8BQ5"/>
<dbReference type="PDBsum" id="8BQ6"/>
<dbReference type="EMDB" id="EMD-11878"/>
<dbReference type="EMDB" id="EMD-15998"/>
<dbReference type="EMDB" id="EMD-16168"/>
<dbReference type="EMDB" id="EMD-16171"/>
<dbReference type="EMDB" id="EMD-16172"/>
<dbReference type="SMR" id="Q9FNN5"/>
<dbReference type="BioGRID" id="16030">
    <property type="interactions" value="2"/>
</dbReference>
<dbReference type="FunCoup" id="Q9FNN5">
    <property type="interactions" value="3754"/>
</dbReference>
<dbReference type="IntAct" id="Q9FNN5">
    <property type="interactions" value="2"/>
</dbReference>
<dbReference type="STRING" id="3702.Q9FNN5"/>
<dbReference type="TCDB" id="3.D.1.6.3">
    <property type="family name" value="the h+ or na+-translocating nadh dehydrogenase (ndh) family"/>
</dbReference>
<dbReference type="iPTMnet" id="Q9FNN5"/>
<dbReference type="PaxDb" id="3702-AT5G08530.1"/>
<dbReference type="ProMEX" id="Q9FNN5"/>
<dbReference type="ProteomicsDB" id="239041"/>
<dbReference type="EnsemblPlants" id="AT5G08530.1">
    <property type="protein sequence ID" value="AT5G08530.1"/>
    <property type="gene ID" value="AT5G08530"/>
</dbReference>
<dbReference type="GeneID" id="830752"/>
<dbReference type="Gramene" id="AT5G08530.1">
    <property type="protein sequence ID" value="AT5G08530.1"/>
    <property type="gene ID" value="AT5G08530"/>
</dbReference>
<dbReference type="KEGG" id="ath:AT5G08530"/>
<dbReference type="Araport" id="AT5G08530"/>
<dbReference type="TAIR" id="AT5G08530">
    <property type="gene designation" value="CI51"/>
</dbReference>
<dbReference type="eggNOG" id="KOG2658">
    <property type="taxonomic scope" value="Eukaryota"/>
</dbReference>
<dbReference type="HOGENOM" id="CLU_014881_1_0_1"/>
<dbReference type="InParanoid" id="Q9FNN5"/>
<dbReference type="OMA" id="QGDGKPH"/>
<dbReference type="OrthoDB" id="1044849at2759"/>
<dbReference type="PhylomeDB" id="Q9FNN5"/>
<dbReference type="BioCyc" id="ARA:AT5G08530-MONOMER"/>
<dbReference type="BioCyc" id="MetaCyc:AT5G08530-MONOMER"/>
<dbReference type="PRO" id="PR:Q9FNN5"/>
<dbReference type="Proteomes" id="UP000006548">
    <property type="component" value="Chromosome 5"/>
</dbReference>
<dbReference type="ExpressionAtlas" id="Q9FNN5">
    <property type="expression patterns" value="baseline and differential"/>
</dbReference>
<dbReference type="GO" id="GO:0005743">
    <property type="term" value="C:mitochondrial inner membrane"/>
    <property type="evidence" value="ECO:0007669"/>
    <property type="project" value="UniProtKB-SubCell"/>
</dbReference>
<dbReference type="GO" id="GO:0005739">
    <property type="term" value="C:mitochondrion"/>
    <property type="evidence" value="ECO:0000314"/>
    <property type="project" value="TAIR"/>
</dbReference>
<dbReference type="GO" id="GO:0005886">
    <property type="term" value="C:plasma membrane"/>
    <property type="evidence" value="ECO:0007005"/>
    <property type="project" value="TAIR"/>
</dbReference>
<dbReference type="GO" id="GO:0051539">
    <property type="term" value="F:4 iron, 4 sulfur cluster binding"/>
    <property type="evidence" value="ECO:0007669"/>
    <property type="project" value="UniProtKB-KW"/>
</dbReference>
<dbReference type="GO" id="GO:0010181">
    <property type="term" value="F:FMN binding"/>
    <property type="evidence" value="ECO:0007669"/>
    <property type="project" value="InterPro"/>
</dbReference>
<dbReference type="GO" id="GO:0046872">
    <property type="term" value="F:metal ion binding"/>
    <property type="evidence" value="ECO:0007669"/>
    <property type="project" value="UniProtKB-KW"/>
</dbReference>
<dbReference type="GO" id="GO:0051287">
    <property type="term" value="F:NAD binding"/>
    <property type="evidence" value="ECO:0007669"/>
    <property type="project" value="InterPro"/>
</dbReference>
<dbReference type="GO" id="GO:0008137">
    <property type="term" value="F:NADH dehydrogenase (ubiquinone) activity"/>
    <property type="evidence" value="ECO:0007669"/>
    <property type="project" value="UniProtKB-EC"/>
</dbReference>
<dbReference type="FunFam" id="1.20.1440.230:FF:000001">
    <property type="entry name" value="Mitochondrial NADH dehydrogenase flavoprotein 1"/>
    <property type="match status" value="1"/>
</dbReference>
<dbReference type="FunFam" id="3.10.20.600:FF:000001">
    <property type="entry name" value="NADH dehydrogenase [ubiquinone] flavoprotein 1, mitochondrial"/>
    <property type="match status" value="1"/>
</dbReference>
<dbReference type="FunFam" id="3.40.50.11540:FF:000001">
    <property type="entry name" value="NADH dehydrogenase [ubiquinone] flavoprotein 1, mitochondrial"/>
    <property type="match status" value="1"/>
</dbReference>
<dbReference type="Gene3D" id="3.10.20.600">
    <property type="match status" value="1"/>
</dbReference>
<dbReference type="Gene3D" id="3.40.50.11540">
    <property type="entry name" value="NADH-ubiquinone oxidoreductase 51kDa subunit"/>
    <property type="match status" value="1"/>
</dbReference>
<dbReference type="Gene3D" id="1.20.1440.230">
    <property type="entry name" value="NADH-ubiquinone oxidoreductase 51kDa subunit, iron-sulphur binding domain"/>
    <property type="match status" value="1"/>
</dbReference>
<dbReference type="InterPro" id="IPR050837">
    <property type="entry name" value="ComplexI_51kDa_subunit"/>
</dbReference>
<dbReference type="InterPro" id="IPR001949">
    <property type="entry name" value="NADH-UbQ_OxRdtase_51kDa_CS"/>
</dbReference>
<dbReference type="InterPro" id="IPR011537">
    <property type="entry name" value="NADH-UbQ_OxRdtase_suF"/>
</dbReference>
<dbReference type="InterPro" id="IPR011538">
    <property type="entry name" value="Nuo51_FMN-bd"/>
</dbReference>
<dbReference type="InterPro" id="IPR037225">
    <property type="entry name" value="Nuo51_FMN-bd_sf"/>
</dbReference>
<dbReference type="InterPro" id="IPR019575">
    <property type="entry name" value="Nuop51_4Fe4S-bd"/>
</dbReference>
<dbReference type="InterPro" id="IPR037207">
    <property type="entry name" value="Nuop51_4Fe4S-bd_sf"/>
</dbReference>
<dbReference type="InterPro" id="IPR054765">
    <property type="entry name" value="SLBB_dom"/>
</dbReference>
<dbReference type="NCBIfam" id="TIGR01959">
    <property type="entry name" value="nuoF_fam"/>
    <property type="match status" value="1"/>
</dbReference>
<dbReference type="NCBIfam" id="NF010120">
    <property type="entry name" value="PRK13596.1"/>
    <property type="match status" value="1"/>
</dbReference>
<dbReference type="PANTHER" id="PTHR11780:SF10">
    <property type="entry name" value="NADH DEHYDROGENASE [UBIQUINONE] FLAVOPROTEIN 1, MITOCHONDRIAL"/>
    <property type="match status" value="1"/>
</dbReference>
<dbReference type="PANTHER" id="PTHR11780">
    <property type="entry name" value="NADH-UBIQUINONE OXIDOREDUCTASE FLAVOPROTEIN 1 NDUFV1"/>
    <property type="match status" value="1"/>
</dbReference>
<dbReference type="Pfam" id="PF01512">
    <property type="entry name" value="Complex1_51K"/>
    <property type="match status" value="1"/>
</dbReference>
<dbReference type="Pfam" id="PF10589">
    <property type="entry name" value="NADH_4Fe-4S"/>
    <property type="match status" value="1"/>
</dbReference>
<dbReference type="Pfam" id="PF22461">
    <property type="entry name" value="SLBB_2"/>
    <property type="match status" value="1"/>
</dbReference>
<dbReference type="SMART" id="SM00928">
    <property type="entry name" value="NADH_4Fe-4S"/>
    <property type="match status" value="1"/>
</dbReference>
<dbReference type="SUPFAM" id="SSF142019">
    <property type="entry name" value="Nqo1 FMN-binding domain-like"/>
    <property type="match status" value="1"/>
</dbReference>
<dbReference type="SUPFAM" id="SSF142984">
    <property type="entry name" value="Nqo1 middle domain-like"/>
    <property type="match status" value="1"/>
</dbReference>
<dbReference type="SUPFAM" id="SSF140490">
    <property type="entry name" value="Nqo1C-terminal domain-like"/>
    <property type="match status" value="1"/>
</dbReference>
<dbReference type="PROSITE" id="PS00644">
    <property type="entry name" value="COMPLEX1_51K_1"/>
    <property type="match status" value="1"/>
</dbReference>
<dbReference type="PROSITE" id="PS00645">
    <property type="entry name" value="COMPLEX1_51K_2"/>
    <property type="match status" value="1"/>
</dbReference>
<name>NDUV1_ARATH</name>
<gene>
    <name type="ordered locus">At5g08530</name>
    <name type="ORF">MAH20.9</name>
</gene>
<feature type="transit peptide" description="Mitochondrion" evidence="4">
    <location>
        <begin position="1"/>
        <end position="30"/>
    </location>
</feature>
<feature type="chain" id="PRO_0000410789" description="NADH dehydrogenase [ubiquinone] flavoprotein 1, mitochondrial">
    <location>
        <begin position="31"/>
        <end position="486"/>
    </location>
</feature>
<feature type="region of interest" description="Disordered" evidence="3">
    <location>
        <begin position="31"/>
        <end position="57"/>
    </location>
</feature>
<feature type="compositionally biased region" description="Low complexity" evidence="3">
    <location>
        <begin position="31"/>
        <end position="40"/>
    </location>
</feature>
<feature type="compositionally biased region" description="Pro residues" evidence="3">
    <location>
        <begin position="41"/>
        <end position="50"/>
    </location>
</feature>
<feature type="binding site" evidence="1">
    <location>
        <begin position="110"/>
        <end position="119"/>
    </location>
    <ligand>
        <name>NADH</name>
        <dbReference type="ChEBI" id="CHEBI:57945"/>
    </ligand>
</feature>
<feature type="binding site" evidence="1">
    <location>
        <begin position="222"/>
        <end position="270"/>
    </location>
    <ligand>
        <name>FMN</name>
        <dbReference type="ChEBI" id="CHEBI:58210"/>
    </ligand>
</feature>
<feature type="binding site" evidence="2">
    <location>
        <position position="402"/>
    </location>
    <ligand>
        <name>[4Fe-4S] cluster</name>
        <dbReference type="ChEBI" id="CHEBI:49883"/>
    </ligand>
</feature>
<feature type="binding site" evidence="2">
    <location>
        <position position="405"/>
    </location>
    <ligand>
        <name>[4Fe-4S] cluster</name>
        <dbReference type="ChEBI" id="CHEBI:49883"/>
    </ligand>
</feature>
<feature type="binding site" evidence="2">
    <location>
        <position position="408"/>
    </location>
    <ligand>
        <name>[4Fe-4S] cluster</name>
        <dbReference type="ChEBI" id="CHEBI:49883"/>
    </ligand>
</feature>
<feature type="binding site" evidence="2">
    <location>
        <position position="448"/>
    </location>
    <ligand>
        <name>[4Fe-4S] cluster</name>
        <dbReference type="ChEBI" id="CHEBI:49883"/>
    </ligand>
</feature>
<feature type="helix" evidence="8">
    <location>
        <begin position="60"/>
        <end position="62"/>
    </location>
</feature>
<feature type="turn" evidence="8">
    <location>
        <begin position="66"/>
        <end position="69"/>
    </location>
</feature>
<feature type="helix" evidence="8">
    <location>
        <begin position="76"/>
        <end position="82"/>
    </location>
</feature>
<feature type="turn" evidence="8">
    <location>
        <begin position="83"/>
        <end position="85"/>
    </location>
</feature>
<feature type="helix" evidence="8">
    <location>
        <begin position="88"/>
        <end position="94"/>
    </location>
</feature>
<feature type="helix" evidence="8">
    <location>
        <begin position="96"/>
        <end position="106"/>
    </location>
</feature>
<feature type="turn" evidence="8">
    <location>
        <begin position="111"/>
        <end position="114"/>
    </location>
</feature>
<feature type="helix" evidence="8">
    <location>
        <begin position="118"/>
        <end position="123"/>
    </location>
</feature>
<feature type="strand" evidence="8">
    <location>
        <begin position="135"/>
        <end position="140"/>
    </location>
</feature>
<feature type="helix" evidence="8">
    <location>
        <begin position="149"/>
        <end position="156"/>
    </location>
</feature>
<feature type="helix" evidence="8">
    <location>
        <begin position="158"/>
        <end position="171"/>
    </location>
</feature>
<feature type="strand" evidence="8">
    <location>
        <begin position="175"/>
        <end position="181"/>
    </location>
</feature>
<feature type="helix" evidence="8">
    <location>
        <begin position="186"/>
        <end position="201"/>
    </location>
</feature>
<feature type="strand" evidence="8">
    <location>
        <begin position="204"/>
        <end position="206"/>
    </location>
</feature>
<feature type="helix" evidence="8">
    <location>
        <begin position="209"/>
        <end position="211"/>
    </location>
</feature>
<feature type="strand" evidence="8">
    <location>
        <begin position="216"/>
        <end position="222"/>
    </location>
</feature>
<feature type="helix" evidence="8">
    <location>
        <begin position="227"/>
        <end position="230"/>
    </location>
</feature>
<feature type="helix" evidence="8">
    <location>
        <begin position="232"/>
        <end position="239"/>
    </location>
</feature>
<feature type="strand" evidence="8">
    <location>
        <begin position="249"/>
        <end position="251"/>
    </location>
</feature>
<feature type="turn" evidence="8">
    <location>
        <begin position="253"/>
        <end position="255"/>
    </location>
</feature>
<feature type="helix" evidence="8">
    <location>
        <begin position="258"/>
        <end position="260"/>
    </location>
</feature>
<feature type="strand" evidence="8">
    <location>
        <begin position="263"/>
        <end position="267"/>
    </location>
</feature>
<feature type="helix" evidence="8">
    <location>
        <begin position="268"/>
        <end position="272"/>
    </location>
</feature>
<feature type="helix" evidence="8">
    <location>
        <begin position="274"/>
        <end position="280"/>
    </location>
</feature>
<feature type="helix" evidence="8">
    <location>
        <begin position="282"/>
        <end position="286"/>
    </location>
</feature>
<feature type="strand" evidence="8">
    <location>
        <begin position="288"/>
        <end position="290"/>
    </location>
</feature>
<feature type="strand" evidence="7">
    <location>
        <begin position="291"/>
        <end position="293"/>
    </location>
</feature>
<feature type="strand" evidence="8">
    <location>
        <begin position="295"/>
        <end position="307"/>
    </location>
</feature>
<feature type="strand" evidence="8">
    <location>
        <begin position="309"/>
        <end position="314"/>
    </location>
</feature>
<feature type="helix" evidence="8">
    <location>
        <begin position="319"/>
        <end position="326"/>
    </location>
</feature>
<feature type="helix" evidence="8">
    <location>
        <begin position="334"/>
        <end position="336"/>
    </location>
</feature>
<feature type="strand" evidence="8">
    <location>
        <begin position="337"/>
        <end position="341"/>
    </location>
</feature>
<feature type="helix" evidence="8">
    <location>
        <begin position="352"/>
        <end position="355"/>
    </location>
</feature>
<feature type="strand" evidence="8">
    <location>
        <begin position="359"/>
        <end position="361"/>
    </location>
</feature>
<feature type="helix" evidence="8">
    <location>
        <begin position="362"/>
        <end position="366"/>
    </location>
</feature>
<feature type="turn" evidence="8">
    <location>
        <begin position="367"/>
        <end position="369"/>
    </location>
</feature>
<feature type="strand" evidence="8">
    <location>
        <begin position="376"/>
        <end position="381"/>
    </location>
</feature>
<feature type="helix" evidence="8">
    <location>
        <begin position="386"/>
        <end position="400"/>
    </location>
</feature>
<feature type="helix" evidence="8">
    <location>
        <begin position="406"/>
        <end position="423"/>
    </location>
</feature>
<feature type="helix" evidence="8">
    <location>
        <begin position="431"/>
        <end position="442"/>
    </location>
</feature>
<feature type="strand" evidence="8">
    <location>
        <begin position="445"/>
        <end position="448"/>
    </location>
</feature>
<feature type="helix" evidence="8">
    <location>
        <begin position="450"/>
        <end position="483"/>
    </location>
</feature>
<organism>
    <name type="scientific">Arabidopsis thaliana</name>
    <name type="common">Mouse-ear cress</name>
    <dbReference type="NCBI Taxonomy" id="3702"/>
    <lineage>
        <taxon>Eukaryota</taxon>
        <taxon>Viridiplantae</taxon>
        <taxon>Streptophyta</taxon>
        <taxon>Embryophyta</taxon>
        <taxon>Tracheophyta</taxon>
        <taxon>Spermatophyta</taxon>
        <taxon>Magnoliopsida</taxon>
        <taxon>eudicotyledons</taxon>
        <taxon>Gunneridae</taxon>
        <taxon>Pentapetalae</taxon>
        <taxon>rosids</taxon>
        <taxon>malvids</taxon>
        <taxon>Brassicales</taxon>
        <taxon>Brassicaceae</taxon>
        <taxon>Camelineae</taxon>
        <taxon>Arabidopsis</taxon>
    </lineage>
</organism>
<reference key="1">
    <citation type="journal article" date="1997" name="DNA Res.">
        <title>Structural analysis of Arabidopsis thaliana chromosome 5. II. Sequence features of the regions of 1,044,062 bp covered by thirteen physically assigned P1 clones.</title>
        <authorList>
            <person name="Kotani H."/>
            <person name="Nakamura Y."/>
            <person name="Sato S."/>
            <person name="Kaneko T."/>
            <person name="Asamizu E."/>
            <person name="Miyajima N."/>
            <person name="Tabata S."/>
        </authorList>
    </citation>
    <scope>NUCLEOTIDE SEQUENCE [LARGE SCALE GENOMIC DNA]</scope>
    <source>
        <strain>cv. Columbia</strain>
    </source>
</reference>
<reference key="2">
    <citation type="journal article" date="2017" name="Plant J.">
        <title>Araport11: a complete reannotation of the Arabidopsis thaliana reference genome.</title>
        <authorList>
            <person name="Cheng C.Y."/>
            <person name="Krishnakumar V."/>
            <person name="Chan A.P."/>
            <person name="Thibaud-Nissen F."/>
            <person name="Schobel S."/>
            <person name="Town C.D."/>
        </authorList>
    </citation>
    <scope>GENOME REANNOTATION</scope>
    <source>
        <strain>cv. Columbia</strain>
    </source>
</reference>
<reference key="3">
    <citation type="journal article" date="2003" name="Science">
        <title>Empirical analysis of transcriptional activity in the Arabidopsis genome.</title>
        <authorList>
            <person name="Yamada K."/>
            <person name="Lim J."/>
            <person name="Dale J.M."/>
            <person name="Chen H."/>
            <person name="Shinn P."/>
            <person name="Palm C.J."/>
            <person name="Southwick A.M."/>
            <person name="Wu H.C."/>
            <person name="Kim C.J."/>
            <person name="Nguyen M."/>
            <person name="Pham P.K."/>
            <person name="Cheuk R.F."/>
            <person name="Karlin-Newmann G."/>
            <person name="Liu S.X."/>
            <person name="Lam B."/>
            <person name="Sakano H."/>
            <person name="Wu T."/>
            <person name="Yu G."/>
            <person name="Miranda M."/>
            <person name="Quach H.L."/>
            <person name="Tripp M."/>
            <person name="Chang C.H."/>
            <person name="Lee J.M."/>
            <person name="Toriumi M.J."/>
            <person name="Chan M.M."/>
            <person name="Tang C.C."/>
            <person name="Onodera C.S."/>
            <person name="Deng J.M."/>
            <person name="Akiyama K."/>
            <person name="Ansari Y."/>
            <person name="Arakawa T."/>
            <person name="Banh J."/>
            <person name="Banno F."/>
            <person name="Bowser L."/>
            <person name="Brooks S.Y."/>
            <person name="Carninci P."/>
            <person name="Chao Q."/>
            <person name="Choy N."/>
            <person name="Enju A."/>
            <person name="Goldsmith A.D."/>
            <person name="Gurjal M."/>
            <person name="Hansen N.F."/>
            <person name="Hayashizaki Y."/>
            <person name="Johnson-Hopson C."/>
            <person name="Hsuan V.W."/>
            <person name="Iida K."/>
            <person name="Karnes M."/>
            <person name="Khan S."/>
            <person name="Koesema E."/>
            <person name="Ishida J."/>
            <person name="Jiang P.X."/>
            <person name="Jones T."/>
            <person name="Kawai J."/>
            <person name="Kamiya A."/>
            <person name="Meyers C."/>
            <person name="Nakajima M."/>
            <person name="Narusaka M."/>
            <person name="Seki M."/>
            <person name="Sakurai T."/>
            <person name="Satou M."/>
            <person name="Tamse R."/>
            <person name="Vaysberg M."/>
            <person name="Wallender E.K."/>
            <person name="Wong C."/>
            <person name="Yamamura Y."/>
            <person name="Yuan S."/>
            <person name="Shinozaki K."/>
            <person name="Davis R.W."/>
            <person name="Theologis A."/>
            <person name="Ecker J.R."/>
        </authorList>
    </citation>
    <scope>NUCLEOTIDE SEQUENCE [LARGE SCALE MRNA]</scope>
    <source>
        <strain>cv. Columbia</strain>
    </source>
</reference>
<reference key="4">
    <citation type="submission" date="2002-03" db="EMBL/GenBank/DDBJ databases">
        <title>Full-length cDNA from Arabidopsis thaliana.</title>
        <authorList>
            <person name="Brover V.V."/>
            <person name="Troukhan M.E."/>
            <person name="Alexandrov N.A."/>
            <person name="Lu Y.-P."/>
            <person name="Flavell R.B."/>
            <person name="Feldmann K.A."/>
        </authorList>
    </citation>
    <scope>NUCLEOTIDE SEQUENCE [LARGE SCALE MRNA]</scope>
</reference>
<reference key="5">
    <citation type="journal article" date="2015" name="J. Exp. Bot.">
        <title>Identification of cleavage sites and substrate proteins for two mitochondrial intermediate peptidases in Arabidopsis thaliana.</title>
        <authorList>
            <person name="Carrie C."/>
            <person name="Venne A.S."/>
            <person name="Zahedi R.P."/>
            <person name="Soll J."/>
        </authorList>
    </citation>
    <scope>IDENTIFICATION BY MASS SPECTROMETRY</scope>
    <scope>CLEAVAGE OF TRANSIT PEPTIDE AFTER PHE-30</scope>
</reference>
<sequence length="486" mass="53449">MAPVRGILGLQRAVSIWKESNRLTPALRSFSTQAASTSTTPQPPPPPPPPEKTHFGGLKDEDRIFTNLYGLHDPFLKGAMKRGDWHRTKDLVLKGTDWIVNEMKKSGLRGRGGAGFPSGLKWSFMPKVSDGRPSYLVVNADESEPGTCKDREIMRHDPHKLLEGCLIAGVGMRASAAYIYIRGEYVNERLNLEKARREAYAAGLLGKNACGSGYDFEVYIHFGAGAYICGEETALLESLEGKQGKPRLKPPFPANAGLYGCPTTVTNVETVAVSPTILRRGPEWFSSFGRKNNAGTKLFCISGHVNKPCTVEEEMSIPLKELIERHCGGVRGGWDNLLAIIPGGSSVPLIPKNICEDVLMDFDALKAVQSGLGTAAVIVMDKSTDVVDAIARLSYFYKHESCGQCTPCREGTGWLWMIMERMKVGNAKLEEIDMLQEVTKQIEGHTICALGDAAAWPVQGLIRHFRPELERRIRERAERELLQAAA</sequence>